<name>MTLD_SALA4</name>
<evidence type="ECO:0000255" key="1">
    <source>
        <dbReference type="HAMAP-Rule" id="MF_00196"/>
    </source>
</evidence>
<organism>
    <name type="scientific">Salmonella agona (strain SL483)</name>
    <dbReference type="NCBI Taxonomy" id="454166"/>
    <lineage>
        <taxon>Bacteria</taxon>
        <taxon>Pseudomonadati</taxon>
        <taxon>Pseudomonadota</taxon>
        <taxon>Gammaproteobacteria</taxon>
        <taxon>Enterobacterales</taxon>
        <taxon>Enterobacteriaceae</taxon>
        <taxon>Salmonella</taxon>
    </lineage>
</organism>
<accession>B5EX99</accession>
<comment type="catalytic activity">
    <reaction evidence="1">
        <text>D-mannitol 1-phosphate + NAD(+) = beta-D-fructose 6-phosphate + NADH + H(+)</text>
        <dbReference type="Rhea" id="RHEA:19661"/>
        <dbReference type="ChEBI" id="CHEBI:15378"/>
        <dbReference type="ChEBI" id="CHEBI:57540"/>
        <dbReference type="ChEBI" id="CHEBI:57634"/>
        <dbReference type="ChEBI" id="CHEBI:57945"/>
        <dbReference type="ChEBI" id="CHEBI:61381"/>
        <dbReference type="EC" id="1.1.1.17"/>
    </reaction>
</comment>
<comment type="similarity">
    <text evidence="1">Belongs to the mannitol dehydrogenase family.</text>
</comment>
<gene>
    <name evidence="1" type="primary">mtlD</name>
    <name type="ordered locus">SeAg_B3902</name>
</gene>
<keyword id="KW-0520">NAD</keyword>
<keyword id="KW-0560">Oxidoreductase</keyword>
<feature type="chain" id="PRO_1000099195" description="Mannitol-1-phosphate 5-dehydrogenase">
    <location>
        <begin position="1"/>
        <end position="382"/>
    </location>
</feature>
<feature type="binding site" evidence="1">
    <location>
        <begin position="3"/>
        <end position="14"/>
    </location>
    <ligand>
        <name>NAD(+)</name>
        <dbReference type="ChEBI" id="CHEBI:57540"/>
    </ligand>
</feature>
<sequence length="382" mass="40930">MKALHFGAGNIGRGFIGKLLADAGIQLTFADVNQVVLDALNARHSYQVHVVGENEQVDTVSGVNAVSSIGDDVVDLIAHVDLITTAVGPVVLERIAPAIAKGLVKRKAQGVDAPLNIIACENMVRGTTQLKGHVMNALADGDKAWVEQHVGFVDSAVDRIVPPSASATNDPLEVTVETFSEWIVDKTQFKGTLPNIPGMELTDNLMAFVERKLFTLNTGHAITAYLGKLAGHQTIRDAILDESIRAVVKGAMEESGAVLIKRYGFDADKHAAYIQKILGRFENPYLKDDVERVGRQPLRKLSAGDRLIKPLLGTLEYGLPHVNLVKGIAAAMHFRSDEDPQAQELAALITEKGPQAALAQISGLDANSDVVAEAVNAYNATK</sequence>
<dbReference type="EC" id="1.1.1.17" evidence="1"/>
<dbReference type="EMBL" id="CP001138">
    <property type="protein sequence ID" value="ACH50323.1"/>
    <property type="molecule type" value="Genomic_DNA"/>
</dbReference>
<dbReference type="RefSeq" id="WP_000645395.1">
    <property type="nucleotide sequence ID" value="NC_011149.1"/>
</dbReference>
<dbReference type="SMR" id="B5EX99"/>
<dbReference type="KEGG" id="sea:SeAg_B3902"/>
<dbReference type="HOGENOM" id="CLU_036089_2_0_6"/>
<dbReference type="Proteomes" id="UP000008819">
    <property type="component" value="Chromosome"/>
</dbReference>
<dbReference type="GO" id="GO:0005829">
    <property type="term" value="C:cytosol"/>
    <property type="evidence" value="ECO:0007669"/>
    <property type="project" value="TreeGrafter"/>
</dbReference>
<dbReference type="GO" id="GO:0008926">
    <property type="term" value="F:mannitol-1-phosphate 5-dehydrogenase activity"/>
    <property type="evidence" value="ECO:0007669"/>
    <property type="project" value="UniProtKB-UniRule"/>
</dbReference>
<dbReference type="GO" id="GO:0019592">
    <property type="term" value="P:mannitol catabolic process"/>
    <property type="evidence" value="ECO:0007669"/>
    <property type="project" value="TreeGrafter"/>
</dbReference>
<dbReference type="FunFam" id="1.10.1040.10:FF:000009">
    <property type="entry name" value="Mannitol-1-phosphate 5-dehydrogenase"/>
    <property type="match status" value="1"/>
</dbReference>
<dbReference type="FunFam" id="3.40.50.720:FF:000075">
    <property type="entry name" value="Mannitol-1-phosphate 5-dehydrogenase"/>
    <property type="match status" value="1"/>
</dbReference>
<dbReference type="Gene3D" id="1.10.1040.10">
    <property type="entry name" value="N-(1-d-carboxylethyl)-l-norvaline Dehydrogenase, domain 2"/>
    <property type="match status" value="1"/>
</dbReference>
<dbReference type="Gene3D" id="3.40.50.720">
    <property type="entry name" value="NAD(P)-binding Rossmann-like Domain"/>
    <property type="match status" value="1"/>
</dbReference>
<dbReference type="HAMAP" id="MF_00196">
    <property type="entry name" value="Mannitol_dehydrog"/>
    <property type="match status" value="1"/>
</dbReference>
<dbReference type="InterPro" id="IPR008927">
    <property type="entry name" value="6-PGluconate_DH-like_C_sf"/>
</dbReference>
<dbReference type="InterPro" id="IPR013328">
    <property type="entry name" value="6PGD_dom2"/>
</dbReference>
<dbReference type="InterPro" id="IPR023028">
    <property type="entry name" value="Mannitol_1_phos_5_DH"/>
</dbReference>
<dbReference type="InterPro" id="IPR000669">
    <property type="entry name" value="Mannitol_DH"/>
</dbReference>
<dbReference type="InterPro" id="IPR013118">
    <property type="entry name" value="Mannitol_DH_C"/>
</dbReference>
<dbReference type="InterPro" id="IPR023027">
    <property type="entry name" value="Mannitol_DH_CS"/>
</dbReference>
<dbReference type="InterPro" id="IPR013131">
    <property type="entry name" value="Mannitol_DH_N"/>
</dbReference>
<dbReference type="InterPro" id="IPR036291">
    <property type="entry name" value="NAD(P)-bd_dom_sf"/>
</dbReference>
<dbReference type="NCBIfam" id="NF002646">
    <property type="entry name" value="PRK02318.1-2"/>
    <property type="match status" value="1"/>
</dbReference>
<dbReference type="NCBIfam" id="NF002647">
    <property type="entry name" value="PRK02318.1-3"/>
    <property type="match status" value="1"/>
</dbReference>
<dbReference type="NCBIfam" id="NF002648">
    <property type="entry name" value="PRK02318.1-4"/>
    <property type="match status" value="1"/>
</dbReference>
<dbReference type="NCBIfam" id="NF002650">
    <property type="entry name" value="PRK02318.2-2"/>
    <property type="match status" value="1"/>
</dbReference>
<dbReference type="NCBIfam" id="NF002652">
    <property type="entry name" value="PRK02318.2-5"/>
    <property type="match status" value="1"/>
</dbReference>
<dbReference type="PANTHER" id="PTHR30524:SF0">
    <property type="entry name" value="ALTRONATE OXIDOREDUCTASE-RELATED"/>
    <property type="match status" value="1"/>
</dbReference>
<dbReference type="PANTHER" id="PTHR30524">
    <property type="entry name" value="MANNITOL-1-PHOSPHATE 5-DEHYDROGENASE"/>
    <property type="match status" value="1"/>
</dbReference>
<dbReference type="Pfam" id="PF01232">
    <property type="entry name" value="Mannitol_dh"/>
    <property type="match status" value="1"/>
</dbReference>
<dbReference type="Pfam" id="PF08125">
    <property type="entry name" value="Mannitol_dh_C"/>
    <property type="match status" value="1"/>
</dbReference>
<dbReference type="PRINTS" id="PR00084">
    <property type="entry name" value="MTLDHDRGNASE"/>
</dbReference>
<dbReference type="SUPFAM" id="SSF48179">
    <property type="entry name" value="6-phosphogluconate dehydrogenase C-terminal domain-like"/>
    <property type="match status" value="1"/>
</dbReference>
<dbReference type="SUPFAM" id="SSF51735">
    <property type="entry name" value="NAD(P)-binding Rossmann-fold domains"/>
    <property type="match status" value="1"/>
</dbReference>
<dbReference type="PROSITE" id="PS00974">
    <property type="entry name" value="MANNITOL_DHGENASE"/>
    <property type="match status" value="1"/>
</dbReference>
<reference key="1">
    <citation type="journal article" date="2011" name="J. Bacteriol.">
        <title>Comparative genomics of 28 Salmonella enterica isolates: evidence for CRISPR-mediated adaptive sublineage evolution.</title>
        <authorList>
            <person name="Fricke W.F."/>
            <person name="Mammel M.K."/>
            <person name="McDermott P.F."/>
            <person name="Tartera C."/>
            <person name="White D.G."/>
            <person name="Leclerc J.E."/>
            <person name="Ravel J."/>
            <person name="Cebula T.A."/>
        </authorList>
    </citation>
    <scope>NUCLEOTIDE SEQUENCE [LARGE SCALE GENOMIC DNA]</scope>
    <source>
        <strain>SL483</strain>
    </source>
</reference>
<protein>
    <recommendedName>
        <fullName evidence="1">Mannitol-1-phosphate 5-dehydrogenase</fullName>
        <ecNumber evidence="1">1.1.1.17</ecNumber>
    </recommendedName>
</protein>
<proteinExistence type="inferred from homology"/>